<protein>
    <recommendedName>
        <fullName evidence="1">Histidinol dehydrogenase</fullName>
        <shortName evidence="1">HDH</shortName>
        <ecNumber evidence="1">1.1.1.23</ecNumber>
    </recommendedName>
</protein>
<name>HISX_NOCFA</name>
<feature type="chain" id="PRO_0000135806" description="Histidinol dehydrogenase">
    <location>
        <begin position="1"/>
        <end position="445"/>
    </location>
</feature>
<feature type="active site" description="Proton acceptor" evidence="1">
    <location>
        <position position="340"/>
    </location>
</feature>
<feature type="active site" description="Proton acceptor" evidence="1">
    <location>
        <position position="341"/>
    </location>
</feature>
<feature type="binding site" evidence="1">
    <location>
        <position position="134"/>
    </location>
    <ligand>
        <name>NAD(+)</name>
        <dbReference type="ChEBI" id="CHEBI:57540"/>
    </ligand>
</feature>
<feature type="binding site" evidence="1">
    <location>
        <position position="198"/>
    </location>
    <ligand>
        <name>NAD(+)</name>
        <dbReference type="ChEBI" id="CHEBI:57540"/>
    </ligand>
</feature>
<feature type="binding site" evidence="1">
    <location>
        <position position="226"/>
    </location>
    <ligand>
        <name>NAD(+)</name>
        <dbReference type="ChEBI" id="CHEBI:57540"/>
    </ligand>
</feature>
<feature type="binding site" evidence="1">
    <location>
        <position position="249"/>
    </location>
    <ligand>
        <name>substrate</name>
    </ligand>
</feature>
<feature type="binding site" evidence="1">
    <location>
        <position position="271"/>
    </location>
    <ligand>
        <name>substrate</name>
    </ligand>
</feature>
<feature type="binding site" evidence="1">
    <location>
        <position position="271"/>
    </location>
    <ligand>
        <name>Zn(2+)</name>
        <dbReference type="ChEBI" id="CHEBI:29105"/>
    </ligand>
</feature>
<feature type="binding site" evidence="1">
    <location>
        <position position="274"/>
    </location>
    <ligand>
        <name>substrate</name>
    </ligand>
</feature>
<feature type="binding site" evidence="1">
    <location>
        <position position="274"/>
    </location>
    <ligand>
        <name>Zn(2+)</name>
        <dbReference type="ChEBI" id="CHEBI:29105"/>
    </ligand>
</feature>
<feature type="binding site" evidence="1">
    <location>
        <position position="341"/>
    </location>
    <ligand>
        <name>substrate</name>
    </ligand>
</feature>
<feature type="binding site" evidence="1">
    <location>
        <position position="374"/>
    </location>
    <ligand>
        <name>substrate</name>
    </ligand>
</feature>
<feature type="binding site" evidence="1">
    <location>
        <position position="374"/>
    </location>
    <ligand>
        <name>Zn(2+)</name>
        <dbReference type="ChEBI" id="CHEBI:29105"/>
    </ligand>
</feature>
<feature type="binding site" evidence="1">
    <location>
        <position position="428"/>
    </location>
    <ligand>
        <name>substrate</name>
    </ligand>
</feature>
<feature type="binding site" evidence="1">
    <location>
        <position position="433"/>
    </location>
    <ligand>
        <name>substrate</name>
    </ligand>
</feature>
<feature type="binding site" evidence="1">
    <location>
        <position position="433"/>
    </location>
    <ligand>
        <name>Zn(2+)</name>
        <dbReference type="ChEBI" id="CHEBI:29105"/>
    </ligand>
</feature>
<proteinExistence type="inferred from homology"/>
<evidence type="ECO:0000255" key="1">
    <source>
        <dbReference type="HAMAP-Rule" id="MF_01024"/>
    </source>
</evidence>
<gene>
    <name evidence="1" type="primary">hisD</name>
    <name type="ordered locus">NFA_18450</name>
</gene>
<accession>Q5YYQ0</accession>
<dbReference type="EC" id="1.1.1.23" evidence="1"/>
<dbReference type="EMBL" id="AP006618">
    <property type="protein sequence ID" value="BAD56691.1"/>
    <property type="molecule type" value="Genomic_DNA"/>
</dbReference>
<dbReference type="RefSeq" id="WP_011208376.1">
    <property type="nucleotide sequence ID" value="NC_006361.1"/>
</dbReference>
<dbReference type="SMR" id="Q5YYQ0"/>
<dbReference type="STRING" id="247156.NFA_18450"/>
<dbReference type="GeneID" id="61132629"/>
<dbReference type="KEGG" id="nfa:NFA_18450"/>
<dbReference type="eggNOG" id="COG0141">
    <property type="taxonomic scope" value="Bacteria"/>
</dbReference>
<dbReference type="HOGENOM" id="CLU_006732_3_1_11"/>
<dbReference type="OrthoDB" id="9805269at2"/>
<dbReference type="UniPathway" id="UPA00031">
    <property type="reaction ID" value="UER00014"/>
</dbReference>
<dbReference type="Proteomes" id="UP000006820">
    <property type="component" value="Chromosome"/>
</dbReference>
<dbReference type="GO" id="GO:0005829">
    <property type="term" value="C:cytosol"/>
    <property type="evidence" value="ECO:0007669"/>
    <property type="project" value="TreeGrafter"/>
</dbReference>
<dbReference type="GO" id="GO:0004399">
    <property type="term" value="F:histidinol dehydrogenase activity"/>
    <property type="evidence" value="ECO:0007669"/>
    <property type="project" value="UniProtKB-UniRule"/>
</dbReference>
<dbReference type="GO" id="GO:0051287">
    <property type="term" value="F:NAD binding"/>
    <property type="evidence" value="ECO:0007669"/>
    <property type="project" value="InterPro"/>
</dbReference>
<dbReference type="GO" id="GO:0008270">
    <property type="term" value="F:zinc ion binding"/>
    <property type="evidence" value="ECO:0007669"/>
    <property type="project" value="UniProtKB-UniRule"/>
</dbReference>
<dbReference type="GO" id="GO:0000105">
    <property type="term" value="P:L-histidine biosynthetic process"/>
    <property type="evidence" value="ECO:0007669"/>
    <property type="project" value="UniProtKB-UniRule"/>
</dbReference>
<dbReference type="CDD" id="cd06572">
    <property type="entry name" value="Histidinol_dh"/>
    <property type="match status" value="1"/>
</dbReference>
<dbReference type="FunFam" id="3.40.50.1980:FF:000001">
    <property type="entry name" value="Histidinol dehydrogenase"/>
    <property type="match status" value="1"/>
</dbReference>
<dbReference type="Gene3D" id="1.20.5.1300">
    <property type="match status" value="1"/>
</dbReference>
<dbReference type="Gene3D" id="3.40.50.1980">
    <property type="entry name" value="Nitrogenase molybdenum iron protein domain"/>
    <property type="match status" value="2"/>
</dbReference>
<dbReference type="HAMAP" id="MF_01024">
    <property type="entry name" value="HisD"/>
    <property type="match status" value="1"/>
</dbReference>
<dbReference type="InterPro" id="IPR016161">
    <property type="entry name" value="Ald_DH/histidinol_DH"/>
</dbReference>
<dbReference type="InterPro" id="IPR001692">
    <property type="entry name" value="Histidinol_DH_CS"/>
</dbReference>
<dbReference type="InterPro" id="IPR022695">
    <property type="entry name" value="Histidinol_DH_monofunct"/>
</dbReference>
<dbReference type="InterPro" id="IPR012131">
    <property type="entry name" value="Hstdl_DH"/>
</dbReference>
<dbReference type="NCBIfam" id="TIGR00069">
    <property type="entry name" value="hisD"/>
    <property type="match status" value="1"/>
</dbReference>
<dbReference type="PANTHER" id="PTHR21256:SF2">
    <property type="entry name" value="HISTIDINE BIOSYNTHESIS TRIFUNCTIONAL PROTEIN"/>
    <property type="match status" value="1"/>
</dbReference>
<dbReference type="PANTHER" id="PTHR21256">
    <property type="entry name" value="HISTIDINOL DEHYDROGENASE HDH"/>
    <property type="match status" value="1"/>
</dbReference>
<dbReference type="Pfam" id="PF00815">
    <property type="entry name" value="Histidinol_dh"/>
    <property type="match status" value="1"/>
</dbReference>
<dbReference type="PIRSF" id="PIRSF000099">
    <property type="entry name" value="Histidinol_dh"/>
    <property type="match status" value="1"/>
</dbReference>
<dbReference type="PRINTS" id="PR00083">
    <property type="entry name" value="HOLDHDRGNASE"/>
</dbReference>
<dbReference type="SUPFAM" id="SSF53720">
    <property type="entry name" value="ALDH-like"/>
    <property type="match status" value="1"/>
</dbReference>
<dbReference type="PROSITE" id="PS00611">
    <property type="entry name" value="HISOL_DEHYDROGENASE"/>
    <property type="match status" value="1"/>
</dbReference>
<comment type="function">
    <text evidence="1">Catalyzes the sequential NAD-dependent oxidations of L-histidinol to L-histidinaldehyde and then to L-histidine.</text>
</comment>
<comment type="catalytic activity">
    <reaction evidence="1">
        <text>L-histidinol + 2 NAD(+) + H2O = L-histidine + 2 NADH + 3 H(+)</text>
        <dbReference type="Rhea" id="RHEA:20641"/>
        <dbReference type="ChEBI" id="CHEBI:15377"/>
        <dbReference type="ChEBI" id="CHEBI:15378"/>
        <dbReference type="ChEBI" id="CHEBI:57540"/>
        <dbReference type="ChEBI" id="CHEBI:57595"/>
        <dbReference type="ChEBI" id="CHEBI:57699"/>
        <dbReference type="ChEBI" id="CHEBI:57945"/>
        <dbReference type="EC" id="1.1.1.23"/>
    </reaction>
</comment>
<comment type="cofactor">
    <cofactor evidence="1">
        <name>Zn(2+)</name>
        <dbReference type="ChEBI" id="CHEBI:29105"/>
    </cofactor>
    <text evidence="1">Binds 1 zinc ion per subunit.</text>
</comment>
<comment type="pathway">
    <text evidence="1">Amino-acid biosynthesis; L-histidine biosynthesis; L-histidine from 5-phospho-alpha-D-ribose 1-diphosphate: step 9/9.</text>
</comment>
<comment type="similarity">
    <text evidence="1">Belongs to the histidinol dehydrogenase family.</text>
</comment>
<reference key="1">
    <citation type="journal article" date="2004" name="Proc. Natl. Acad. Sci. U.S.A.">
        <title>The complete genomic sequence of Nocardia farcinica IFM 10152.</title>
        <authorList>
            <person name="Ishikawa J."/>
            <person name="Yamashita A."/>
            <person name="Mikami Y."/>
            <person name="Hoshino Y."/>
            <person name="Kurita H."/>
            <person name="Hotta K."/>
            <person name="Shiba T."/>
            <person name="Hattori M."/>
        </authorList>
    </citation>
    <scope>NUCLEOTIDE SEQUENCE [LARGE SCALE GENOMIC DNA]</scope>
    <source>
        <strain>IFM 10152</strain>
    </source>
</reference>
<sequence length="445" mass="45665">MTSRIELARVDLRGRTPSTAELRAALPRGGVDVDSVLHHVRPVVEAVRERGAAAALEFGEKFDGVVPATVRVPAAELARALDELDPAVRAALEESIARARRVHADQRRTDTTTEVVPGGTVTERWVPVARVGLYVPGGNAVYPSSVVMNVVPAQTAGVGSLVVASPPQANFGGLPHPTILAAAALLGVEEVWAVGGAQAVALLSYGGTDTDGAPLDPVDLITGPGNIYVTAAKRLCRGLVGIDAEAGPTEIAILADATADPAHVAADLISQAEHDVLAASVLVTDSVALADAVDAALTAQLAVVKHAERVRTALTGKQSGTVLVDDITQGLRVVDAYAAEHLEIQTADASAVAARVRSAGAVFVGPYAPVSLGDYCAGSNHVLPTAGCARHSSGLSVQTFLRGIHVVEYTEAALKDVAGHVVALADAEDLPAHGQAVTVRFEALS</sequence>
<organism>
    <name type="scientific">Nocardia farcinica (strain IFM 10152)</name>
    <dbReference type="NCBI Taxonomy" id="247156"/>
    <lineage>
        <taxon>Bacteria</taxon>
        <taxon>Bacillati</taxon>
        <taxon>Actinomycetota</taxon>
        <taxon>Actinomycetes</taxon>
        <taxon>Mycobacteriales</taxon>
        <taxon>Nocardiaceae</taxon>
        <taxon>Nocardia</taxon>
    </lineage>
</organism>
<keyword id="KW-0028">Amino-acid biosynthesis</keyword>
<keyword id="KW-0368">Histidine biosynthesis</keyword>
<keyword id="KW-0479">Metal-binding</keyword>
<keyword id="KW-0520">NAD</keyword>
<keyword id="KW-0560">Oxidoreductase</keyword>
<keyword id="KW-1185">Reference proteome</keyword>
<keyword id="KW-0862">Zinc</keyword>